<proteinExistence type="inferred from homology"/>
<feature type="chain" id="PRO_1000144526" description="Large ribosomal subunit protein uL23">
    <location>
        <begin position="1"/>
        <end position="104"/>
    </location>
</feature>
<protein>
    <recommendedName>
        <fullName evidence="1">Large ribosomal subunit protein uL23</fullName>
    </recommendedName>
    <alternativeName>
        <fullName evidence="2">50S ribosomal protein L23</fullName>
    </alternativeName>
</protein>
<dbReference type="EMBL" id="CP000117">
    <property type="protein sequence ID" value="ABA20317.1"/>
    <property type="molecule type" value="Genomic_DNA"/>
</dbReference>
<dbReference type="SMR" id="Q3MFB9"/>
<dbReference type="STRING" id="240292.Ava_0693"/>
<dbReference type="KEGG" id="ava:Ava_0693"/>
<dbReference type="eggNOG" id="COG0089">
    <property type="taxonomic scope" value="Bacteria"/>
</dbReference>
<dbReference type="HOGENOM" id="CLU_037562_3_2_3"/>
<dbReference type="Proteomes" id="UP000002533">
    <property type="component" value="Chromosome"/>
</dbReference>
<dbReference type="GO" id="GO:1990904">
    <property type="term" value="C:ribonucleoprotein complex"/>
    <property type="evidence" value="ECO:0007669"/>
    <property type="project" value="UniProtKB-KW"/>
</dbReference>
<dbReference type="GO" id="GO:0005840">
    <property type="term" value="C:ribosome"/>
    <property type="evidence" value="ECO:0007669"/>
    <property type="project" value="UniProtKB-KW"/>
</dbReference>
<dbReference type="GO" id="GO:0019843">
    <property type="term" value="F:rRNA binding"/>
    <property type="evidence" value="ECO:0007669"/>
    <property type="project" value="UniProtKB-UniRule"/>
</dbReference>
<dbReference type="GO" id="GO:0003735">
    <property type="term" value="F:structural constituent of ribosome"/>
    <property type="evidence" value="ECO:0007669"/>
    <property type="project" value="InterPro"/>
</dbReference>
<dbReference type="GO" id="GO:0006412">
    <property type="term" value="P:translation"/>
    <property type="evidence" value="ECO:0007669"/>
    <property type="project" value="UniProtKB-UniRule"/>
</dbReference>
<dbReference type="FunFam" id="3.30.70.330:FF:000001">
    <property type="entry name" value="50S ribosomal protein L23"/>
    <property type="match status" value="1"/>
</dbReference>
<dbReference type="Gene3D" id="3.30.70.330">
    <property type="match status" value="1"/>
</dbReference>
<dbReference type="HAMAP" id="MF_01369_B">
    <property type="entry name" value="Ribosomal_uL23_B"/>
    <property type="match status" value="1"/>
</dbReference>
<dbReference type="InterPro" id="IPR012677">
    <property type="entry name" value="Nucleotide-bd_a/b_plait_sf"/>
</dbReference>
<dbReference type="InterPro" id="IPR013025">
    <property type="entry name" value="Ribosomal_uL23-like"/>
</dbReference>
<dbReference type="InterPro" id="IPR012678">
    <property type="entry name" value="Ribosomal_uL23/eL15/eS24_sf"/>
</dbReference>
<dbReference type="NCBIfam" id="NF004363">
    <property type="entry name" value="PRK05738.2-4"/>
    <property type="match status" value="1"/>
</dbReference>
<dbReference type="NCBIfam" id="NF004368">
    <property type="entry name" value="PRK05738.3-4"/>
    <property type="match status" value="1"/>
</dbReference>
<dbReference type="PANTHER" id="PTHR11620">
    <property type="entry name" value="60S RIBOSOMAL PROTEIN L23A"/>
    <property type="match status" value="1"/>
</dbReference>
<dbReference type="Pfam" id="PF00276">
    <property type="entry name" value="Ribosomal_L23"/>
    <property type="match status" value="1"/>
</dbReference>
<dbReference type="SUPFAM" id="SSF54189">
    <property type="entry name" value="Ribosomal proteins S24e, L23 and L15e"/>
    <property type="match status" value="1"/>
</dbReference>
<comment type="function">
    <text evidence="1">One of the early assembly proteins it binds 23S rRNA. One of the proteins that surrounds the polypeptide exit tunnel on the outside of the ribosome. Forms the main docking site for trigger factor binding to the ribosome.</text>
</comment>
<comment type="subunit">
    <text evidence="1">Part of the 50S ribosomal subunit. Contacts protein L29, and trigger factor when it is bound to the ribosome.</text>
</comment>
<comment type="similarity">
    <text evidence="1">Belongs to the universal ribosomal protein uL23 family.</text>
</comment>
<reference key="1">
    <citation type="journal article" date="2014" name="Stand. Genomic Sci.">
        <title>Complete genome sequence of Anabaena variabilis ATCC 29413.</title>
        <authorList>
            <person name="Thiel T."/>
            <person name="Pratte B.S."/>
            <person name="Zhong J."/>
            <person name="Goodwin L."/>
            <person name="Copeland A."/>
            <person name="Lucas S."/>
            <person name="Han C."/>
            <person name="Pitluck S."/>
            <person name="Land M.L."/>
            <person name="Kyrpides N.C."/>
            <person name="Woyke T."/>
        </authorList>
    </citation>
    <scope>NUCLEOTIDE SEQUENCE [LARGE SCALE GENOMIC DNA]</scope>
    <source>
        <strain>ATCC 29413 / PCC 7937</strain>
    </source>
</reference>
<organism>
    <name type="scientific">Trichormus variabilis (strain ATCC 29413 / PCC 7937)</name>
    <name type="common">Anabaena variabilis</name>
    <dbReference type="NCBI Taxonomy" id="240292"/>
    <lineage>
        <taxon>Bacteria</taxon>
        <taxon>Bacillati</taxon>
        <taxon>Cyanobacteriota</taxon>
        <taxon>Cyanophyceae</taxon>
        <taxon>Nostocales</taxon>
        <taxon>Nostocaceae</taxon>
        <taxon>Trichormus</taxon>
    </lineage>
</organism>
<evidence type="ECO:0000255" key="1">
    <source>
        <dbReference type="HAMAP-Rule" id="MF_01369"/>
    </source>
</evidence>
<evidence type="ECO:0000305" key="2"/>
<keyword id="KW-0687">Ribonucleoprotein</keyword>
<keyword id="KW-0689">Ribosomal protein</keyword>
<keyword id="KW-0694">RNA-binding</keyword>
<keyword id="KW-0699">rRNA-binding</keyword>
<name>RL23_TRIV2</name>
<sequence>MAKFDPRNLPDLVRRPILTEKATIMMEQDKYTFEVTPKATKPQIRAAIEDLFQVKVVKVNTALPPRRKKRVGKFIGFKPQYKKAIVTIAPGDVEKIRQVLFPEV</sequence>
<accession>Q3MFB9</accession>
<gene>
    <name evidence="1" type="primary">rplW</name>
    <name evidence="1" type="synonym">rpl23</name>
    <name type="ordered locus">Ava_0693</name>
</gene>